<evidence type="ECO:0000255" key="1">
    <source>
        <dbReference type="HAMAP-Rule" id="MF_00182"/>
    </source>
</evidence>
<proteinExistence type="inferred from homology"/>
<reference key="1">
    <citation type="submission" date="2006-03" db="EMBL/GenBank/DDBJ databases">
        <title>Complete genome sequence of Francisella tularensis LVS (Live Vaccine Strain).</title>
        <authorList>
            <person name="Chain P."/>
            <person name="Larimer F."/>
            <person name="Land M."/>
            <person name="Stilwagen S."/>
            <person name="Larsson P."/>
            <person name="Bearden S."/>
            <person name="Chu M."/>
            <person name="Oyston P."/>
            <person name="Forsman M."/>
            <person name="Andersson S."/>
            <person name="Lindler L."/>
            <person name="Titball R."/>
            <person name="Garcia E."/>
        </authorList>
    </citation>
    <scope>NUCLEOTIDE SEQUENCE [LARGE SCALE GENOMIC DNA]</scope>
    <source>
        <strain>LVS</strain>
    </source>
</reference>
<name>FMT_FRATH</name>
<comment type="function">
    <text evidence="1">Attaches a formyl group to the free amino group of methionyl-tRNA(fMet). The formyl group appears to play a dual role in the initiator identity of N-formylmethionyl-tRNA by promoting its recognition by IF2 and preventing the misappropriation of this tRNA by the elongation apparatus.</text>
</comment>
<comment type="catalytic activity">
    <reaction evidence="1">
        <text>L-methionyl-tRNA(fMet) + (6R)-10-formyltetrahydrofolate = N-formyl-L-methionyl-tRNA(fMet) + (6S)-5,6,7,8-tetrahydrofolate + H(+)</text>
        <dbReference type="Rhea" id="RHEA:24380"/>
        <dbReference type="Rhea" id="RHEA-COMP:9952"/>
        <dbReference type="Rhea" id="RHEA-COMP:9953"/>
        <dbReference type="ChEBI" id="CHEBI:15378"/>
        <dbReference type="ChEBI" id="CHEBI:57453"/>
        <dbReference type="ChEBI" id="CHEBI:78530"/>
        <dbReference type="ChEBI" id="CHEBI:78844"/>
        <dbReference type="ChEBI" id="CHEBI:195366"/>
        <dbReference type="EC" id="2.1.2.9"/>
    </reaction>
</comment>
<comment type="similarity">
    <text evidence="1">Belongs to the Fmt family.</text>
</comment>
<gene>
    <name evidence="1" type="primary">fmt</name>
    <name type="ordered locus">FTL_1285</name>
</gene>
<protein>
    <recommendedName>
        <fullName evidence="1">Methionyl-tRNA formyltransferase</fullName>
        <ecNumber evidence="1">2.1.2.9</ecNumber>
    </recommendedName>
</protein>
<organism>
    <name type="scientific">Francisella tularensis subsp. holarctica (strain LVS)</name>
    <dbReference type="NCBI Taxonomy" id="376619"/>
    <lineage>
        <taxon>Bacteria</taxon>
        <taxon>Pseudomonadati</taxon>
        <taxon>Pseudomonadota</taxon>
        <taxon>Gammaproteobacteria</taxon>
        <taxon>Thiotrichales</taxon>
        <taxon>Francisellaceae</taxon>
        <taxon>Francisella</taxon>
    </lineage>
</organism>
<keyword id="KW-0648">Protein biosynthesis</keyword>
<keyword id="KW-1185">Reference proteome</keyword>
<keyword id="KW-0808">Transferase</keyword>
<feature type="chain" id="PRO_1000020065" description="Methionyl-tRNA formyltransferase">
    <location>
        <begin position="1"/>
        <end position="313"/>
    </location>
</feature>
<feature type="binding site" evidence="1">
    <location>
        <begin position="113"/>
        <end position="116"/>
    </location>
    <ligand>
        <name>(6S)-5,6,7,8-tetrahydrofolate</name>
        <dbReference type="ChEBI" id="CHEBI:57453"/>
    </ligand>
</feature>
<dbReference type="EC" id="2.1.2.9" evidence="1"/>
<dbReference type="EMBL" id="AM233362">
    <property type="protein sequence ID" value="CAJ79724.1"/>
    <property type="molecule type" value="Genomic_DNA"/>
</dbReference>
<dbReference type="RefSeq" id="WP_003016443.1">
    <property type="nucleotide sequence ID" value="NZ_CP009694.1"/>
</dbReference>
<dbReference type="SMR" id="Q2A2U6"/>
<dbReference type="KEGG" id="ftl:FTL_1285"/>
<dbReference type="Proteomes" id="UP000001944">
    <property type="component" value="Chromosome"/>
</dbReference>
<dbReference type="GO" id="GO:0005829">
    <property type="term" value="C:cytosol"/>
    <property type="evidence" value="ECO:0007669"/>
    <property type="project" value="TreeGrafter"/>
</dbReference>
<dbReference type="GO" id="GO:0004479">
    <property type="term" value="F:methionyl-tRNA formyltransferase activity"/>
    <property type="evidence" value="ECO:0007669"/>
    <property type="project" value="UniProtKB-UniRule"/>
</dbReference>
<dbReference type="CDD" id="cd08646">
    <property type="entry name" value="FMT_core_Met-tRNA-FMT_N"/>
    <property type="match status" value="1"/>
</dbReference>
<dbReference type="CDD" id="cd08704">
    <property type="entry name" value="Met_tRNA_FMT_C"/>
    <property type="match status" value="1"/>
</dbReference>
<dbReference type="Gene3D" id="3.40.50.12230">
    <property type="match status" value="1"/>
</dbReference>
<dbReference type="HAMAP" id="MF_00182">
    <property type="entry name" value="Formyl_trans"/>
    <property type="match status" value="1"/>
</dbReference>
<dbReference type="InterPro" id="IPR005794">
    <property type="entry name" value="Fmt"/>
</dbReference>
<dbReference type="InterPro" id="IPR005793">
    <property type="entry name" value="Formyl_trans_C"/>
</dbReference>
<dbReference type="InterPro" id="IPR002376">
    <property type="entry name" value="Formyl_transf_N"/>
</dbReference>
<dbReference type="InterPro" id="IPR036477">
    <property type="entry name" value="Formyl_transf_N_sf"/>
</dbReference>
<dbReference type="InterPro" id="IPR011034">
    <property type="entry name" value="Formyl_transferase-like_C_sf"/>
</dbReference>
<dbReference type="InterPro" id="IPR001555">
    <property type="entry name" value="GART_AS"/>
</dbReference>
<dbReference type="InterPro" id="IPR044135">
    <property type="entry name" value="Met-tRNA-FMT_C"/>
</dbReference>
<dbReference type="InterPro" id="IPR041711">
    <property type="entry name" value="Met-tRNA-FMT_N"/>
</dbReference>
<dbReference type="NCBIfam" id="TIGR00460">
    <property type="entry name" value="fmt"/>
    <property type="match status" value="1"/>
</dbReference>
<dbReference type="PANTHER" id="PTHR11138">
    <property type="entry name" value="METHIONYL-TRNA FORMYLTRANSFERASE"/>
    <property type="match status" value="1"/>
</dbReference>
<dbReference type="PANTHER" id="PTHR11138:SF5">
    <property type="entry name" value="METHIONYL-TRNA FORMYLTRANSFERASE, MITOCHONDRIAL"/>
    <property type="match status" value="1"/>
</dbReference>
<dbReference type="Pfam" id="PF02911">
    <property type="entry name" value="Formyl_trans_C"/>
    <property type="match status" value="1"/>
</dbReference>
<dbReference type="Pfam" id="PF00551">
    <property type="entry name" value="Formyl_trans_N"/>
    <property type="match status" value="1"/>
</dbReference>
<dbReference type="SUPFAM" id="SSF50486">
    <property type="entry name" value="FMT C-terminal domain-like"/>
    <property type="match status" value="1"/>
</dbReference>
<dbReference type="SUPFAM" id="SSF53328">
    <property type="entry name" value="Formyltransferase"/>
    <property type="match status" value="1"/>
</dbReference>
<dbReference type="PROSITE" id="PS00373">
    <property type="entry name" value="GART"/>
    <property type="match status" value="1"/>
</dbReference>
<sequence length="313" mass="35353">MKKLNIIFAGTPDISAQVLKDLYKSQHNIQAVLTQPDRAKGRGKKVQFSPVKEVALANHTPVFQPLSFKKNPEVLEQIKQLKPDVIVVIAYGIIVPQEFLDIPRYGCLNIHVSLLPKWRGAAPIQRAIQAGDTKTGVCIMQMDAGLDTGDILNTLEIEIQETDTSQTLHDKFAKLSIKPLLETLEKIEIIKPEPQQGEPTYAHKITKQEGLIDFTKSAWRISCHIRAFTPWPGAYFILDDEAIKVGEFEILYQNTDNRKAGTIIDIYRSGFDIATSDKIIRFRQLQFPNKKMLNIVDILNGKDLDKYIGYKLG</sequence>
<accession>Q2A2U6</accession>